<feature type="chain" id="PRO_0000424207" description="Secoisolariciresinol dehydrogenase">
    <location>
        <begin position="1"/>
        <end position="278" status="greater than"/>
    </location>
</feature>
<feature type="active site" description="Proton donor/acceptor" evidence="2 3 6 7">
    <location>
        <position position="167"/>
    </location>
</feature>
<feature type="binding site" evidence="2 6 7">
    <location>
        <begin position="23"/>
        <end position="28"/>
    </location>
    <ligand>
        <name>NAD(+)</name>
        <dbReference type="ChEBI" id="CHEBI:57540"/>
    </ligand>
</feature>
<feature type="binding site" evidence="2 6 7">
    <location>
        <position position="47"/>
    </location>
    <ligand>
        <name>NAD(+)</name>
        <dbReference type="ChEBI" id="CHEBI:57540"/>
    </ligand>
</feature>
<feature type="binding site" evidence="2 6 7">
    <location>
        <position position="73"/>
    </location>
    <ligand>
        <name>NAD(+)</name>
        <dbReference type="ChEBI" id="CHEBI:57540"/>
    </ligand>
</feature>
<feature type="binding site" evidence="2 6 7">
    <location>
        <position position="99"/>
    </location>
    <ligand>
        <name>NAD(+)</name>
        <dbReference type="ChEBI" id="CHEBI:57540"/>
    </ligand>
</feature>
<feature type="binding site" evidence="2 6 7">
    <location>
        <position position="104"/>
    </location>
    <ligand>
        <name>substrate</name>
    </ligand>
</feature>
<feature type="binding site" evidence="2 6 7">
    <location>
        <position position="164"/>
    </location>
    <ligand>
        <name>substrate</name>
    </ligand>
</feature>
<feature type="binding site" evidence="2 6 7">
    <location>
        <position position="171"/>
    </location>
    <ligand>
        <name>NAD(+)</name>
        <dbReference type="ChEBI" id="CHEBI:57540"/>
    </ligand>
</feature>
<feature type="binding site" evidence="6 7">
    <location>
        <position position="200"/>
    </location>
    <ligand>
        <name>NAD(+)</name>
        <dbReference type="ChEBI" id="CHEBI:57540"/>
    </ligand>
</feature>
<feature type="mutagenesis site" description="Strongly reduces enzyme activity." evidence="3">
    <original>S</original>
    <variation>A</variation>
    <location>
        <position position="153"/>
    </location>
</feature>
<feature type="mutagenesis site" description="Abolishes enzyme activity." evidence="3">
    <original>Y</original>
    <variation>A</variation>
    <location>
        <position position="167"/>
    </location>
</feature>
<feature type="mutagenesis site" description="Abolishes enzyme activity." evidence="3">
    <original>K</original>
    <variation>A</variation>
    <location>
        <position position="171"/>
    </location>
</feature>
<feature type="non-terminal residue">
    <location>
        <position position="278"/>
    </location>
</feature>
<feature type="turn" evidence="8">
    <location>
        <begin position="13"/>
        <end position="16"/>
    </location>
</feature>
<feature type="strand" evidence="8">
    <location>
        <begin position="18"/>
        <end position="23"/>
    </location>
</feature>
<feature type="helix" evidence="8">
    <location>
        <begin position="27"/>
        <end position="38"/>
    </location>
</feature>
<feature type="strand" evidence="8">
    <location>
        <begin position="42"/>
        <end position="48"/>
    </location>
</feature>
<feature type="helix" evidence="8">
    <location>
        <begin position="50"/>
        <end position="60"/>
    </location>
</feature>
<feature type="turn" evidence="8">
    <location>
        <begin position="63"/>
        <end position="65"/>
    </location>
</feature>
<feature type="strand" evidence="8">
    <location>
        <begin position="66"/>
        <end position="70"/>
    </location>
</feature>
<feature type="helix" evidence="8">
    <location>
        <begin position="76"/>
        <end position="90"/>
    </location>
</feature>
<feature type="strand" evidence="8">
    <location>
        <begin position="95"/>
        <end position="98"/>
    </location>
</feature>
<feature type="turn" evidence="8">
    <location>
        <begin position="110"/>
        <end position="112"/>
    </location>
</feature>
<feature type="helix" evidence="8">
    <location>
        <begin position="115"/>
        <end position="125"/>
    </location>
</feature>
<feature type="helix" evidence="8">
    <location>
        <begin position="127"/>
        <end position="140"/>
    </location>
</feature>
<feature type="turn" evidence="8">
    <location>
        <begin position="141"/>
        <end position="144"/>
    </location>
</feature>
<feature type="strand" evidence="8">
    <location>
        <begin position="146"/>
        <end position="151"/>
    </location>
</feature>
<feature type="helix" evidence="8">
    <location>
        <begin position="154"/>
        <end position="156"/>
    </location>
</feature>
<feature type="strand" evidence="9">
    <location>
        <begin position="161"/>
        <end position="163"/>
    </location>
</feature>
<feature type="helix" evidence="8">
    <location>
        <begin position="165"/>
        <end position="185"/>
    </location>
</feature>
<feature type="helix" evidence="8">
    <location>
        <begin position="186"/>
        <end position="188"/>
    </location>
</feature>
<feature type="strand" evidence="8">
    <location>
        <begin position="190"/>
        <end position="198"/>
    </location>
</feature>
<feature type="strand" evidence="8">
    <location>
        <begin position="208"/>
        <end position="210"/>
    </location>
</feature>
<feature type="helix" evidence="8">
    <location>
        <begin position="213"/>
        <end position="222"/>
    </location>
</feature>
<feature type="helix" evidence="8">
    <location>
        <begin position="233"/>
        <end position="244"/>
    </location>
</feature>
<feature type="helix" evidence="8">
    <location>
        <begin position="246"/>
        <end position="248"/>
    </location>
</feature>
<feature type="strand" evidence="8">
    <location>
        <begin position="255"/>
        <end position="259"/>
    </location>
</feature>
<feature type="helix" evidence="8">
    <location>
        <begin position="262"/>
        <end position="264"/>
    </location>
</feature>
<feature type="helix" evidence="8">
    <location>
        <begin position="268"/>
        <end position="272"/>
    </location>
</feature>
<keyword id="KW-0002">3D-structure</keyword>
<keyword id="KW-0520">NAD</keyword>
<keyword id="KW-0547">Nucleotide-binding</keyword>
<keyword id="KW-0560">Oxidoreductase</keyword>
<accession>Q94KL8</accession>
<protein>
    <recommendedName>
        <fullName evidence="4">Secoisolariciresinol dehydrogenase</fullName>
        <ecNumber evidence="1 2 3">1.1.1.331</ecNumber>
    </recommendedName>
</protein>
<organism>
    <name type="scientific">Podophyllum peltatum</name>
    <name type="common">American mandrake</name>
    <dbReference type="NCBI Taxonomy" id="35933"/>
    <lineage>
        <taxon>Eukaryota</taxon>
        <taxon>Viridiplantae</taxon>
        <taxon>Streptophyta</taxon>
        <taxon>Embryophyta</taxon>
        <taxon>Tracheophyta</taxon>
        <taxon>Spermatophyta</taxon>
        <taxon>Magnoliopsida</taxon>
        <taxon>Ranunculales</taxon>
        <taxon>Berberidaceae</taxon>
        <taxon>Podophylloideae</taxon>
        <taxon>Podophylleae</taxon>
        <taxon>Podophyllum</taxon>
    </lineage>
</organism>
<reference key="1">
    <citation type="journal article" date="2001" name="J. Biol. Chem.">
        <title>Secoisolariciresinol dehydrogenase purification, cloning, and functional expression. Implications for human health protection.</title>
        <authorList>
            <person name="Xia Z.Q."/>
            <person name="Costa M.A."/>
            <person name="Pelissier H.C."/>
            <person name="Davin L.B."/>
            <person name="Lewis N.G."/>
        </authorList>
    </citation>
    <scope>NUCLEOTIDE SEQUENCE [MRNA]</scope>
    <scope>FUNCTION</scope>
    <scope>CATALYTIC ACTIVITY</scope>
    <source>
        <tissue>Rhizome</tissue>
    </source>
</reference>
<reference key="2">
    <citation type="journal article" date="2006" name="Org. Biomol. Chem.">
        <title>Secoisolariciresinol dehydrogenase: mode of catalysis and stereospecificity of hydride transfer in Podophyllum peltatum.</title>
        <authorList>
            <person name="Moinuddin S.G."/>
            <person name="Youn B."/>
            <person name="Bedgar D.L."/>
            <person name="Costa M.A."/>
            <person name="Helms G.L."/>
            <person name="Kang C."/>
            <person name="Davin L.B."/>
            <person name="Lewis N.G."/>
        </authorList>
    </citation>
    <scope>FUNCTION</scope>
    <scope>CATALYTIC ACTIVITY</scope>
    <scope>ACTIVE SITE</scope>
    <scope>MUTAGENESIS OF SER-153; TYR-167 AND LYS-171</scope>
</reference>
<reference key="3">
    <citation type="journal article" date="2005" name="J. Biol. Chem.">
        <title>Crystal structures of apo-form and binary/ternary complexes of Podophyllum secoisolariciresinol dehydrogenase, an enzyme involved in formation of health-protecting and plant defense lignans.</title>
        <authorList>
            <person name="Youn B."/>
            <person name="Moinuddin S.G."/>
            <person name="Davin L.B."/>
            <person name="Lewis N.G."/>
            <person name="Kang C."/>
        </authorList>
    </citation>
    <scope>X-RAY CRYSTALLOGRAPHY (1.60 ANGSTROMS) IN COMPLEXES WITH NAD AND MATAIRESINOL</scope>
    <scope>CATALYTIC ACTIVITY</scope>
    <scope>ACTIVE SITE</scope>
    <scope>SUBUNIT</scope>
</reference>
<proteinExistence type="evidence at protein level"/>
<comment type="function">
    <text evidence="1 3">Oxidoreductase involved in lignan biosynthesis. Catalyzes the stereospecific conversion of (-)-secoisolariciresinol to (-)-matairesinol via a lactol intermediate.</text>
</comment>
<comment type="catalytic activity">
    <reaction evidence="1 2 3">
        <text>(-)-secoisolariciresinol + 2 NAD(+) = (-)-matairesinol + 2 NADH + 2 H(+)</text>
        <dbReference type="Rhea" id="RHEA:33887"/>
        <dbReference type="ChEBI" id="CHEBI:6698"/>
        <dbReference type="ChEBI" id="CHEBI:15378"/>
        <dbReference type="ChEBI" id="CHEBI:57540"/>
        <dbReference type="ChEBI" id="CHEBI:57945"/>
        <dbReference type="ChEBI" id="CHEBI:65004"/>
        <dbReference type="EC" id="1.1.1.331"/>
    </reaction>
</comment>
<comment type="subunit">
    <text evidence="2">Homotetramer.</text>
</comment>
<comment type="similarity">
    <text evidence="5">Belongs to the short-chain dehydrogenases/reductases (SDR) family.</text>
</comment>
<evidence type="ECO:0000269" key="1">
    <source>
    </source>
</evidence>
<evidence type="ECO:0000269" key="2">
    <source>
    </source>
</evidence>
<evidence type="ECO:0000269" key="3">
    <source>
    </source>
</evidence>
<evidence type="ECO:0000303" key="4">
    <source>
    </source>
</evidence>
<evidence type="ECO:0000305" key="5"/>
<evidence type="ECO:0007744" key="6">
    <source>
        <dbReference type="PDB" id="2BGL"/>
    </source>
</evidence>
<evidence type="ECO:0007744" key="7">
    <source>
        <dbReference type="PDB" id="2BGM"/>
    </source>
</evidence>
<evidence type="ECO:0007829" key="8">
    <source>
        <dbReference type="PDB" id="2BGK"/>
    </source>
</evidence>
<evidence type="ECO:0007829" key="9">
    <source>
        <dbReference type="PDB" id="2BGL"/>
    </source>
</evidence>
<name>SILD_PODPE</name>
<dbReference type="EC" id="1.1.1.331" evidence="1 2 3"/>
<dbReference type="EMBL" id="AF352734">
    <property type="protein sequence ID" value="AAK38664.1"/>
    <property type="molecule type" value="mRNA"/>
</dbReference>
<dbReference type="PDB" id="2BGK">
    <property type="method" value="X-ray"/>
    <property type="resolution" value="1.60 A"/>
    <property type="chains" value="A/B=1-278"/>
</dbReference>
<dbReference type="PDB" id="2BGL">
    <property type="method" value="X-ray"/>
    <property type="resolution" value="2.80 A"/>
    <property type="chains" value="A=1-278"/>
</dbReference>
<dbReference type="PDB" id="2BGM">
    <property type="method" value="X-ray"/>
    <property type="resolution" value="2.00 A"/>
    <property type="chains" value="A=1-278"/>
</dbReference>
<dbReference type="PDBsum" id="2BGK"/>
<dbReference type="PDBsum" id="2BGL"/>
<dbReference type="PDBsum" id="2BGM"/>
<dbReference type="SMR" id="Q94KL8"/>
<dbReference type="KEGG" id="ag:AAK38664"/>
<dbReference type="BRENDA" id="1.1.1.331">
    <property type="organism ID" value="4929"/>
</dbReference>
<dbReference type="EvolutionaryTrace" id="Q94KL8"/>
<dbReference type="GO" id="GO:0000166">
    <property type="term" value="F:nucleotide binding"/>
    <property type="evidence" value="ECO:0007669"/>
    <property type="project" value="UniProtKB-KW"/>
</dbReference>
<dbReference type="GO" id="GO:0120529">
    <property type="term" value="F:secoisolariciresinol dehydrogenase activity"/>
    <property type="evidence" value="ECO:0000314"/>
    <property type="project" value="UniProtKB"/>
</dbReference>
<dbReference type="GO" id="GO:0009807">
    <property type="term" value="P:lignan biosynthetic process"/>
    <property type="evidence" value="ECO:0000314"/>
    <property type="project" value="UniProtKB"/>
</dbReference>
<dbReference type="GO" id="GO:0051289">
    <property type="term" value="P:protein homotetramerization"/>
    <property type="evidence" value="ECO:0000353"/>
    <property type="project" value="UniProtKB"/>
</dbReference>
<dbReference type="CDD" id="cd05326">
    <property type="entry name" value="secoisolariciresinol-DH_like_SDR_c"/>
    <property type="match status" value="1"/>
</dbReference>
<dbReference type="FunFam" id="3.40.50.720:FF:000084">
    <property type="entry name" value="Short-chain dehydrogenase reductase"/>
    <property type="match status" value="1"/>
</dbReference>
<dbReference type="Gene3D" id="3.40.50.720">
    <property type="entry name" value="NAD(P)-binding Rossmann-like Domain"/>
    <property type="match status" value="1"/>
</dbReference>
<dbReference type="InterPro" id="IPR045309">
    <property type="entry name" value="ABA2-like"/>
</dbReference>
<dbReference type="InterPro" id="IPR036291">
    <property type="entry name" value="NAD(P)-bd_dom_sf"/>
</dbReference>
<dbReference type="InterPro" id="IPR020904">
    <property type="entry name" value="Sc_DH/Rdtase_CS"/>
</dbReference>
<dbReference type="InterPro" id="IPR002347">
    <property type="entry name" value="SDR_fam"/>
</dbReference>
<dbReference type="NCBIfam" id="NF005559">
    <property type="entry name" value="PRK07231.1"/>
    <property type="match status" value="1"/>
</dbReference>
<dbReference type="PANTHER" id="PTHR43180">
    <property type="entry name" value="3-OXOACYL-(ACYL-CARRIER-PROTEIN) REDUCTASE (AFU_ORTHOLOGUE AFUA_6G11210)"/>
    <property type="match status" value="1"/>
</dbReference>
<dbReference type="PANTHER" id="PTHR43180:SF45">
    <property type="entry name" value="SECOISOLARICIRESINOL DEHYDROGENASE-LIKE ISOFORM X1"/>
    <property type="match status" value="1"/>
</dbReference>
<dbReference type="Pfam" id="PF13561">
    <property type="entry name" value="adh_short_C2"/>
    <property type="match status" value="1"/>
</dbReference>
<dbReference type="PRINTS" id="PR00081">
    <property type="entry name" value="GDHRDH"/>
</dbReference>
<dbReference type="PRINTS" id="PR00080">
    <property type="entry name" value="SDRFAMILY"/>
</dbReference>
<dbReference type="SUPFAM" id="SSF51735">
    <property type="entry name" value="NAD(P)-binding Rossmann-fold domains"/>
    <property type="match status" value="1"/>
</dbReference>
<dbReference type="PROSITE" id="PS00061">
    <property type="entry name" value="ADH_SHORT"/>
    <property type="match status" value="1"/>
</dbReference>
<sequence length="278" mass="29253">MGSTSTPDSSTNRLQDKVAIITGGAGGIGETTAKLFVRYGAKVVIADIADDHGQKVCNNIGSPDVISFVHCDVTKDEDVRNLVDTTIAKHGKLDIMFGNVGVLSTTPYSILEAGNEDFKRVMDINVYGAFLVAKHAARVMIPAKKGSIVFTASISSFTAGEGVSHVYTATKHAVLGLTTSLCTELGEYGIRVNCVSPYIVASPLLTDVFGVDSSRVEELAHQAANLKGTLLRAEDVADAVAYLAGDESKYVSGLNLVIDGGYTRTNPAFPTALKHGLA</sequence>